<protein>
    <recommendedName>
        <fullName>KH homology domain-containing protein 1</fullName>
    </recommendedName>
</protein>
<organism>
    <name type="scientific">Homo sapiens</name>
    <name type="common">Human</name>
    <dbReference type="NCBI Taxonomy" id="9606"/>
    <lineage>
        <taxon>Eukaryota</taxon>
        <taxon>Metazoa</taxon>
        <taxon>Chordata</taxon>
        <taxon>Craniata</taxon>
        <taxon>Vertebrata</taxon>
        <taxon>Euteleostomi</taxon>
        <taxon>Mammalia</taxon>
        <taxon>Eutheria</taxon>
        <taxon>Euarchontoglires</taxon>
        <taxon>Primates</taxon>
        <taxon>Haplorrhini</taxon>
        <taxon>Catarrhini</taxon>
        <taxon>Hominidae</taxon>
        <taxon>Homo</taxon>
    </lineage>
</organism>
<feature type="chain" id="PRO_0000311358" description="KH homology domain-containing protein 1">
    <location>
        <begin position="1"/>
        <end position="237"/>
    </location>
</feature>
<feature type="transmembrane region" description="Helical" evidence="1">
    <location>
        <begin position="7"/>
        <end position="29"/>
    </location>
</feature>
<feature type="transmembrane region" description="Helical" evidence="1">
    <location>
        <begin position="33"/>
        <end position="50"/>
    </location>
</feature>
<feature type="domain" description="KH; atypical">
    <location>
        <begin position="96"/>
        <end position="155"/>
    </location>
</feature>
<feature type="splice variant" id="VSP_029543" description="In isoform 2." evidence="2">
    <location>
        <begin position="1"/>
        <end position="73"/>
    </location>
</feature>
<feature type="sequence conflict" description="In Ref. 4; AAH22080." evidence="3" ref="4">
    <location>
        <position position="144"/>
    </location>
</feature>
<accession>Q4VXA5</accession>
<accession>Q5JSQ7</accession>
<accession>Q8WTV2</accession>
<accession>Q96NQ5</accession>
<keyword id="KW-0025">Alternative splicing</keyword>
<keyword id="KW-0472">Membrane</keyword>
<keyword id="KW-1267">Proteomics identification</keyword>
<keyword id="KW-1185">Reference proteome</keyword>
<keyword id="KW-0694">RNA-binding</keyword>
<keyword id="KW-0812">Transmembrane</keyword>
<keyword id="KW-1133">Transmembrane helix</keyword>
<reference key="1">
    <citation type="journal article" date="2004" name="Nat. Genet.">
        <title>Complete sequencing and characterization of 21,243 full-length human cDNAs.</title>
        <authorList>
            <person name="Ota T."/>
            <person name="Suzuki Y."/>
            <person name="Nishikawa T."/>
            <person name="Otsuki T."/>
            <person name="Sugiyama T."/>
            <person name="Irie R."/>
            <person name="Wakamatsu A."/>
            <person name="Hayashi K."/>
            <person name="Sato H."/>
            <person name="Nagai K."/>
            <person name="Kimura K."/>
            <person name="Makita H."/>
            <person name="Sekine M."/>
            <person name="Obayashi M."/>
            <person name="Nishi T."/>
            <person name="Shibahara T."/>
            <person name="Tanaka T."/>
            <person name="Ishii S."/>
            <person name="Yamamoto J."/>
            <person name="Saito K."/>
            <person name="Kawai Y."/>
            <person name="Isono Y."/>
            <person name="Nakamura Y."/>
            <person name="Nagahari K."/>
            <person name="Murakami K."/>
            <person name="Yasuda T."/>
            <person name="Iwayanagi T."/>
            <person name="Wagatsuma M."/>
            <person name="Shiratori A."/>
            <person name="Sudo H."/>
            <person name="Hosoiri T."/>
            <person name="Kaku Y."/>
            <person name="Kodaira H."/>
            <person name="Kondo H."/>
            <person name="Sugawara M."/>
            <person name="Takahashi M."/>
            <person name="Kanda K."/>
            <person name="Yokoi T."/>
            <person name="Furuya T."/>
            <person name="Kikkawa E."/>
            <person name="Omura Y."/>
            <person name="Abe K."/>
            <person name="Kamihara K."/>
            <person name="Katsuta N."/>
            <person name="Sato K."/>
            <person name="Tanikawa M."/>
            <person name="Yamazaki M."/>
            <person name="Ninomiya K."/>
            <person name="Ishibashi T."/>
            <person name="Yamashita H."/>
            <person name="Murakawa K."/>
            <person name="Fujimori K."/>
            <person name="Tanai H."/>
            <person name="Kimata M."/>
            <person name="Watanabe M."/>
            <person name="Hiraoka S."/>
            <person name="Chiba Y."/>
            <person name="Ishida S."/>
            <person name="Ono Y."/>
            <person name="Takiguchi S."/>
            <person name="Watanabe S."/>
            <person name="Yosida M."/>
            <person name="Hotuta T."/>
            <person name="Kusano J."/>
            <person name="Kanehori K."/>
            <person name="Takahashi-Fujii A."/>
            <person name="Hara H."/>
            <person name="Tanase T.-O."/>
            <person name="Nomura Y."/>
            <person name="Togiya S."/>
            <person name="Komai F."/>
            <person name="Hara R."/>
            <person name="Takeuchi K."/>
            <person name="Arita M."/>
            <person name="Imose N."/>
            <person name="Musashino K."/>
            <person name="Yuuki H."/>
            <person name="Oshima A."/>
            <person name="Sasaki N."/>
            <person name="Aotsuka S."/>
            <person name="Yoshikawa Y."/>
            <person name="Matsunawa H."/>
            <person name="Ichihara T."/>
            <person name="Shiohata N."/>
            <person name="Sano S."/>
            <person name="Moriya S."/>
            <person name="Momiyama H."/>
            <person name="Satoh N."/>
            <person name="Takami S."/>
            <person name="Terashima Y."/>
            <person name="Suzuki O."/>
            <person name="Nakagawa S."/>
            <person name="Senoh A."/>
            <person name="Mizoguchi H."/>
            <person name="Goto Y."/>
            <person name="Shimizu F."/>
            <person name="Wakebe H."/>
            <person name="Hishigaki H."/>
            <person name="Watanabe T."/>
            <person name="Sugiyama A."/>
            <person name="Takemoto M."/>
            <person name="Kawakami B."/>
            <person name="Yamazaki M."/>
            <person name="Watanabe K."/>
            <person name="Kumagai A."/>
            <person name="Itakura S."/>
            <person name="Fukuzumi Y."/>
            <person name="Fujimori Y."/>
            <person name="Komiyama M."/>
            <person name="Tashiro H."/>
            <person name="Tanigami A."/>
            <person name="Fujiwara T."/>
            <person name="Ono T."/>
            <person name="Yamada K."/>
            <person name="Fujii Y."/>
            <person name="Ozaki K."/>
            <person name="Hirao M."/>
            <person name="Ohmori Y."/>
            <person name="Kawabata A."/>
            <person name="Hikiji T."/>
            <person name="Kobatake N."/>
            <person name="Inagaki H."/>
            <person name="Ikema Y."/>
            <person name="Okamoto S."/>
            <person name="Okitani R."/>
            <person name="Kawakami T."/>
            <person name="Noguchi S."/>
            <person name="Itoh T."/>
            <person name="Shigeta K."/>
            <person name="Senba T."/>
            <person name="Matsumura K."/>
            <person name="Nakajima Y."/>
            <person name="Mizuno T."/>
            <person name="Morinaga M."/>
            <person name="Sasaki M."/>
            <person name="Togashi T."/>
            <person name="Oyama M."/>
            <person name="Hata H."/>
            <person name="Watanabe M."/>
            <person name="Komatsu T."/>
            <person name="Mizushima-Sugano J."/>
            <person name="Satoh T."/>
            <person name="Shirai Y."/>
            <person name="Takahashi Y."/>
            <person name="Nakagawa K."/>
            <person name="Okumura K."/>
            <person name="Nagase T."/>
            <person name="Nomura N."/>
            <person name="Kikuchi H."/>
            <person name="Masuho Y."/>
            <person name="Yamashita R."/>
            <person name="Nakai K."/>
            <person name="Yada T."/>
            <person name="Nakamura Y."/>
            <person name="Ohara O."/>
            <person name="Isogai T."/>
            <person name="Sugano S."/>
        </authorList>
    </citation>
    <scope>NUCLEOTIDE SEQUENCE [LARGE SCALE MRNA]</scope>
    <source>
        <tissue>Cerebellum</tissue>
    </source>
</reference>
<reference key="2">
    <citation type="journal article" date="2003" name="Nature">
        <title>The DNA sequence and analysis of human chromosome 6.</title>
        <authorList>
            <person name="Mungall A.J."/>
            <person name="Palmer S.A."/>
            <person name="Sims S.K."/>
            <person name="Edwards C.A."/>
            <person name="Ashurst J.L."/>
            <person name="Wilming L."/>
            <person name="Jones M.C."/>
            <person name="Horton R."/>
            <person name="Hunt S.E."/>
            <person name="Scott C.E."/>
            <person name="Gilbert J.G.R."/>
            <person name="Clamp M.E."/>
            <person name="Bethel G."/>
            <person name="Milne S."/>
            <person name="Ainscough R."/>
            <person name="Almeida J.P."/>
            <person name="Ambrose K.D."/>
            <person name="Andrews T.D."/>
            <person name="Ashwell R.I.S."/>
            <person name="Babbage A.K."/>
            <person name="Bagguley C.L."/>
            <person name="Bailey J."/>
            <person name="Banerjee R."/>
            <person name="Barker D.J."/>
            <person name="Barlow K.F."/>
            <person name="Bates K."/>
            <person name="Beare D.M."/>
            <person name="Beasley H."/>
            <person name="Beasley O."/>
            <person name="Bird C.P."/>
            <person name="Blakey S.E."/>
            <person name="Bray-Allen S."/>
            <person name="Brook J."/>
            <person name="Brown A.J."/>
            <person name="Brown J.Y."/>
            <person name="Burford D.C."/>
            <person name="Burrill W."/>
            <person name="Burton J."/>
            <person name="Carder C."/>
            <person name="Carter N.P."/>
            <person name="Chapman J.C."/>
            <person name="Clark S.Y."/>
            <person name="Clark G."/>
            <person name="Clee C.M."/>
            <person name="Clegg S."/>
            <person name="Cobley V."/>
            <person name="Collier R.E."/>
            <person name="Collins J.E."/>
            <person name="Colman L.K."/>
            <person name="Corby N.R."/>
            <person name="Coville G.J."/>
            <person name="Culley K.M."/>
            <person name="Dhami P."/>
            <person name="Davies J."/>
            <person name="Dunn M."/>
            <person name="Earthrowl M.E."/>
            <person name="Ellington A.E."/>
            <person name="Evans K.A."/>
            <person name="Faulkner L."/>
            <person name="Francis M.D."/>
            <person name="Frankish A."/>
            <person name="Frankland J."/>
            <person name="French L."/>
            <person name="Garner P."/>
            <person name="Garnett J."/>
            <person name="Ghori M.J."/>
            <person name="Gilby L.M."/>
            <person name="Gillson C.J."/>
            <person name="Glithero R.J."/>
            <person name="Grafham D.V."/>
            <person name="Grant M."/>
            <person name="Gribble S."/>
            <person name="Griffiths C."/>
            <person name="Griffiths M.N.D."/>
            <person name="Hall R."/>
            <person name="Halls K.S."/>
            <person name="Hammond S."/>
            <person name="Harley J.L."/>
            <person name="Hart E.A."/>
            <person name="Heath P.D."/>
            <person name="Heathcott R."/>
            <person name="Holmes S.J."/>
            <person name="Howden P.J."/>
            <person name="Howe K.L."/>
            <person name="Howell G.R."/>
            <person name="Huckle E."/>
            <person name="Humphray S.J."/>
            <person name="Humphries M.D."/>
            <person name="Hunt A.R."/>
            <person name="Johnson C.M."/>
            <person name="Joy A.A."/>
            <person name="Kay M."/>
            <person name="Keenan S.J."/>
            <person name="Kimberley A.M."/>
            <person name="King A."/>
            <person name="Laird G.K."/>
            <person name="Langford C."/>
            <person name="Lawlor S."/>
            <person name="Leongamornlert D.A."/>
            <person name="Leversha M."/>
            <person name="Lloyd C.R."/>
            <person name="Lloyd D.M."/>
            <person name="Loveland J.E."/>
            <person name="Lovell J."/>
            <person name="Martin S."/>
            <person name="Mashreghi-Mohammadi M."/>
            <person name="Maslen G.L."/>
            <person name="Matthews L."/>
            <person name="McCann O.T."/>
            <person name="McLaren S.J."/>
            <person name="McLay K."/>
            <person name="McMurray A."/>
            <person name="Moore M.J.F."/>
            <person name="Mullikin J.C."/>
            <person name="Niblett D."/>
            <person name="Nickerson T."/>
            <person name="Novik K.L."/>
            <person name="Oliver K."/>
            <person name="Overton-Larty E.K."/>
            <person name="Parker A."/>
            <person name="Patel R."/>
            <person name="Pearce A.V."/>
            <person name="Peck A.I."/>
            <person name="Phillimore B.J.C.T."/>
            <person name="Phillips S."/>
            <person name="Plumb R.W."/>
            <person name="Porter K.M."/>
            <person name="Ramsey Y."/>
            <person name="Ranby S.A."/>
            <person name="Rice C.M."/>
            <person name="Ross M.T."/>
            <person name="Searle S.M."/>
            <person name="Sehra H.K."/>
            <person name="Sheridan E."/>
            <person name="Skuce C.D."/>
            <person name="Smith S."/>
            <person name="Smith M."/>
            <person name="Spraggon L."/>
            <person name="Squares S.L."/>
            <person name="Steward C.A."/>
            <person name="Sycamore N."/>
            <person name="Tamlyn-Hall G."/>
            <person name="Tester J."/>
            <person name="Theaker A.J."/>
            <person name="Thomas D.W."/>
            <person name="Thorpe A."/>
            <person name="Tracey A."/>
            <person name="Tromans A."/>
            <person name="Tubby B."/>
            <person name="Wall M."/>
            <person name="Wallis J.M."/>
            <person name="West A.P."/>
            <person name="White S.S."/>
            <person name="Whitehead S.L."/>
            <person name="Whittaker H."/>
            <person name="Wild A."/>
            <person name="Willey D.J."/>
            <person name="Wilmer T.E."/>
            <person name="Wood J.M."/>
            <person name="Wray P.W."/>
            <person name="Wyatt J.C."/>
            <person name="Young L."/>
            <person name="Younger R.M."/>
            <person name="Bentley D.R."/>
            <person name="Coulson A."/>
            <person name="Durbin R.M."/>
            <person name="Hubbard T."/>
            <person name="Sulston J.E."/>
            <person name="Dunham I."/>
            <person name="Rogers J."/>
            <person name="Beck S."/>
        </authorList>
    </citation>
    <scope>NUCLEOTIDE SEQUENCE [LARGE SCALE GENOMIC DNA]</scope>
</reference>
<reference key="3">
    <citation type="submission" date="2005-09" db="EMBL/GenBank/DDBJ databases">
        <authorList>
            <person name="Mural R.J."/>
            <person name="Istrail S."/>
            <person name="Sutton G.G."/>
            <person name="Florea L."/>
            <person name="Halpern A.L."/>
            <person name="Mobarry C.M."/>
            <person name="Lippert R."/>
            <person name="Walenz B."/>
            <person name="Shatkay H."/>
            <person name="Dew I."/>
            <person name="Miller J.R."/>
            <person name="Flanigan M.J."/>
            <person name="Edwards N.J."/>
            <person name="Bolanos R."/>
            <person name="Fasulo D."/>
            <person name="Halldorsson B.V."/>
            <person name="Hannenhalli S."/>
            <person name="Turner R."/>
            <person name="Yooseph S."/>
            <person name="Lu F."/>
            <person name="Nusskern D.R."/>
            <person name="Shue B.C."/>
            <person name="Zheng X.H."/>
            <person name="Zhong F."/>
            <person name="Delcher A.L."/>
            <person name="Huson D.H."/>
            <person name="Kravitz S.A."/>
            <person name="Mouchard L."/>
            <person name="Reinert K."/>
            <person name="Remington K.A."/>
            <person name="Clark A.G."/>
            <person name="Waterman M.S."/>
            <person name="Eichler E.E."/>
            <person name="Adams M.D."/>
            <person name="Hunkapiller M.W."/>
            <person name="Myers E.W."/>
            <person name="Venter J.C."/>
        </authorList>
    </citation>
    <scope>NUCLEOTIDE SEQUENCE [LARGE SCALE GENOMIC DNA]</scope>
</reference>
<reference key="4">
    <citation type="journal article" date="2004" name="Genome Res.">
        <title>The status, quality, and expansion of the NIH full-length cDNA project: the Mammalian Gene Collection (MGC).</title>
        <authorList>
            <consortium name="The MGC Project Team"/>
        </authorList>
    </citation>
    <scope>NUCLEOTIDE SEQUENCE [LARGE SCALE MRNA] (ISOFORM 2)</scope>
    <source>
        <tissue>Brain</tissue>
        <tissue>Ovary</tissue>
    </source>
</reference>
<reference key="5">
    <citation type="journal article" date="2007" name="Genomics">
        <title>Atypical structure and phylogenomic evolution of the new eutherian oocyte- and embryo-expressed KHDC1/DPPA5/ECAT1/OOEP gene family.</title>
        <authorList>
            <person name="Pierre A."/>
            <person name="Gautier M."/>
            <person name="Callebaut I."/>
            <person name="Bontoux M."/>
            <person name="Jeanpierre E."/>
            <person name="Pontarotti P."/>
            <person name="Monget P."/>
        </authorList>
    </citation>
    <scope>IDENTIFICATION</scope>
</reference>
<evidence type="ECO:0000255" key="1"/>
<evidence type="ECO:0000303" key="2">
    <source>
    </source>
</evidence>
<evidence type="ECO:0000305" key="3"/>
<evidence type="ECO:0000312" key="4">
    <source>
        <dbReference type="HGNC" id="HGNC:21366"/>
    </source>
</evidence>
<comment type="subcellular location">
    <subcellularLocation>
        <location evidence="3">Membrane</location>
        <topology evidence="3">Multi-pass membrane protein</topology>
    </subcellularLocation>
</comment>
<comment type="alternative products">
    <event type="alternative splicing"/>
    <isoform>
        <id>Q4VXA5-1</id>
        <name>1</name>
        <sequence type="displayed"/>
    </isoform>
    <isoform>
        <id>Q4VXA5-2</id>
        <name>2</name>
        <sequence type="described" ref="VSP_029543"/>
    </isoform>
</comment>
<comment type="similarity">
    <text evidence="3">Belongs to the KHDC1 family.</text>
</comment>
<comment type="sequence caution" evidence="3">
    <conflict type="miscellaneous discrepancy">
        <sequence resource="EMBL-CDS" id="BAB70824"/>
    </conflict>
    <text>Cloning artifact.</text>
</comment>
<gene>
    <name evidence="4" type="primary">KHDC1</name>
    <name evidence="4" type="synonym">C6orf147</name>
    <name evidence="4" type="synonym">C6orf148</name>
</gene>
<dbReference type="EMBL" id="AK054891">
    <property type="protein sequence ID" value="BAB70824.1"/>
    <property type="status" value="ALT_SEQ"/>
    <property type="molecule type" value="mRNA"/>
</dbReference>
<dbReference type="EMBL" id="AL365232">
    <property type="status" value="NOT_ANNOTATED_CDS"/>
    <property type="molecule type" value="Genomic_DNA"/>
</dbReference>
<dbReference type="EMBL" id="CH471051">
    <property type="protein sequence ID" value="EAW48778.1"/>
    <property type="molecule type" value="Genomic_DNA"/>
</dbReference>
<dbReference type="EMBL" id="CH471051">
    <property type="protein sequence ID" value="EAW48780.1"/>
    <property type="molecule type" value="Genomic_DNA"/>
</dbReference>
<dbReference type="EMBL" id="BC022080">
    <property type="protein sequence ID" value="AAH22080.1"/>
    <property type="molecule type" value="mRNA"/>
</dbReference>
<dbReference type="EMBL" id="BC035766">
    <property type="status" value="NOT_ANNOTATED_CDS"/>
    <property type="molecule type" value="mRNA"/>
</dbReference>
<dbReference type="CCDS" id="CCDS43480.1">
    <molecule id="Q4VXA5-2"/>
</dbReference>
<dbReference type="CCDS" id="CCDS59027.1">
    <molecule id="Q4VXA5-2"/>
</dbReference>
<dbReference type="RefSeq" id="NP_001238803.2">
    <molecule id="Q4VXA5-2"/>
    <property type="nucleotide sequence ID" value="NM_001251874.4"/>
</dbReference>
<dbReference type="RefSeq" id="NP_001382144.2">
    <molecule id="Q4VXA5-2"/>
    <property type="nucleotide sequence ID" value="NM_001395215.3"/>
</dbReference>
<dbReference type="RefSeq" id="NP_001382145.1">
    <molecule id="Q4VXA5-2"/>
    <property type="nucleotide sequence ID" value="NM_001395216.1"/>
</dbReference>
<dbReference type="RefSeq" id="NP_085045.3">
    <molecule id="Q4VXA5-2"/>
    <property type="nucleotide sequence ID" value="NM_030568.4"/>
</dbReference>
<dbReference type="BioGRID" id="123293">
    <property type="interactions" value="18"/>
</dbReference>
<dbReference type="FunCoup" id="Q4VXA5">
    <property type="interactions" value="143"/>
</dbReference>
<dbReference type="IntAct" id="Q4VXA5">
    <property type="interactions" value="11"/>
</dbReference>
<dbReference type="STRING" id="9606.ENSP00000359411"/>
<dbReference type="iPTMnet" id="Q4VXA5"/>
<dbReference type="PhosphoSitePlus" id="Q4VXA5"/>
<dbReference type="BioMuta" id="KHDC1"/>
<dbReference type="DMDM" id="74753931"/>
<dbReference type="jPOST" id="Q4VXA5"/>
<dbReference type="MassIVE" id="Q4VXA5"/>
<dbReference type="PaxDb" id="9606-ENSP00000359411"/>
<dbReference type="PeptideAtlas" id="Q4VXA5"/>
<dbReference type="Antibodypedia" id="35152">
    <property type="antibodies" value="73 antibodies from 21 providers"/>
</dbReference>
<dbReference type="DNASU" id="80759"/>
<dbReference type="Ensembl" id="ENST00000257765.10">
    <molecule id="Q4VXA5-2"/>
    <property type="protein sequence ID" value="ENSP00000257765.5"/>
    <property type="gene ID" value="ENSG00000135314.14"/>
</dbReference>
<dbReference type="Ensembl" id="ENST00000370384.7">
    <molecule id="Q4VXA5-1"/>
    <property type="protein sequence ID" value="ENSP00000359411.3"/>
    <property type="gene ID" value="ENSG00000135314.14"/>
</dbReference>
<dbReference type="GeneID" id="80759"/>
<dbReference type="KEGG" id="hsa:80759"/>
<dbReference type="MANE-Select" id="ENST00000257765.10">
    <molecule id="Q4VXA5-2"/>
    <property type="protein sequence ID" value="ENSP00000257765.5"/>
    <property type="RefSeq nucleotide sequence ID" value="NM_030568.5"/>
    <property type="RefSeq protein sequence ID" value="NP_085045.3"/>
</dbReference>
<dbReference type="UCSC" id="uc003pgn.5">
    <molecule id="Q4VXA5-1"/>
    <property type="organism name" value="human"/>
</dbReference>
<dbReference type="AGR" id="HGNC:21366"/>
<dbReference type="CTD" id="80759"/>
<dbReference type="GeneCards" id="KHDC1"/>
<dbReference type="HGNC" id="HGNC:21366">
    <property type="gene designation" value="KHDC1"/>
</dbReference>
<dbReference type="HPA" id="ENSG00000135314">
    <property type="expression patterns" value="Tissue enhanced (brain)"/>
</dbReference>
<dbReference type="MIM" id="611688">
    <property type="type" value="gene"/>
</dbReference>
<dbReference type="neXtProt" id="NX_Q4VXA5"/>
<dbReference type="OpenTargets" id="ENSG00000135314"/>
<dbReference type="PharmGKB" id="PA162392802"/>
<dbReference type="VEuPathDB" id="HostDB:ENSG00000135314"/>
<dbReference type="eggNOG" id="ENOG502TCCK">
    <property type="taxonomic scope" value="Eukaryota"/>
</dbReference>
<dbReference type="GeneTree" id="ENSGT00940000154353"/>
<dbReference type="HOGENOM" id="CLU_102222_0_0_1"/>
<dbReference type="InParanoid" id="Q4VXA5"/>
<dbReference type="OMA" id="DSYCHAR"/>
<dbReference type="OrthoDB" id="9835352at2759"/>
<dbReference type="PAN-GO" id="Q4VXA5">
    <property type="GO annotations" value="3 GO annotations based on evolutionary models"/>
</dbReference>
<dbReference type="PhylomeDB" id="Q4VXA5"/>
<dbReference type="TreeFam" id="TF337964"/>
<dbReference type="PathwayCommons" id="Q4VXA5"/>
<dbReference type="BioGRID-ORCS" id="80759">
    <property type="hits" value="8 hits in 1150 CRISPR screens"/>
</dbReference>
<dbReference type="ChiTaRS" id="KHDC1">
    <property type="organism name" value="human"/>
</dbReference>
<dbReference type="GenomeRNAi" id="80759"/>
<dbReference type="Pharos" id="Q4VXA5">
    <property type="development level" value="Tbio"/>
</dbReference>
<dbReference type="PRO" id="PR:Q4VXA5"/>
<dbReference type="Proteomes" id="UP000005640">
    <property type="component" value="Chromosome 6"/>
</dbReference>
<dbReference type="RNAct" id="Q4VXA5">
    <property type="molecule type" value="protein"/>
</dbReference>
<dbReference type="Bgee" id="ENSG00000135314">
    <property type="expression patterns" value="Expressed in primordial germ cell in gonad and 106 other cell types or tissues"/>
</dbReference>
<dbReference type="ExpressionAtlas" id="Q4VXA5">
    <property type="expression patterns" value="baseline and differential"/>
</dbReference>
<dbReference type="GO" id="GO:0005737">
    <property type="term" value="C:cytoplasm"/>
    <property type="evidence" value="ECO:0000318"/>
    <property type="project" value="GO_Central"/>
</dbReference>
<dbReference type="GO" id="GO:0016020">
    <property type="term" value="C:membrane"/>
    <property type="evidence" value="ECO:0007669"/>
    <property type="project" value="UniProtKB-SubCell"/>
</dbReference>
<dbReference type="GO" id="GO:0003723">
    <property type="term" value="F:RNA binding"/>
    <property type="evidence" value="ECO:0000318"/>
    <property type="project" value="GO_Central"/>
</dbReference>
<dbReference type="CDD" id="cd12795">
    <property type="entry name" value="FILIA_N_like"/>
    <property type="match status" value="1"/>
</dbReference>
<dbReference type="FunFam" id="3.30.1370.10:FF:000071">
    <property type="entry name" value="KH domain containing 1 like"/>
    <property type="match status" value="1"/>
</dbReference>
<dbReference type="Gene3D" id="3.30.1370.10">
    <property type="entry name" value="K Homology domain, type 1"/>
    <property type="match status" value="1"/>
</dbReference>
<dbReference type="InterPro" id="IPR036612">
    <property type="entry name" value="KH_dom_type_1_sf"/>
</dbReference>
<dbReference type="InterPro" id="IPR031952">
    <property type="entry name" value="MOEP19_KH-like"/>
</dbReference>
<dbReference type="PANTHER" id="PTHR31368">
    <property type="entry name" value="DEVELOPMENT PLURPOTENCY-ASSOCIATED PROTEIN 1/5 FAMILY MEMBER"/>
    <property type="match status" value="1"/>
</dbReference>
<dbReference type="PANTHER" id="PTHR31368:SF6">
    <property type="entry name" value="KH HOMOLOGY DOMAIN-CONTAINING PROTEIN 1"/>
    <property type="match status" value="1"/>
</dbReference>
<dbReference type="Pfam" id="PF16005">
    <property type="entry name" value="MOEP19"/>
    <property type="match status" value="1"/>
</dbReference>
<sequence>MLSAFQRLFRVLFVIETVSEYGVLIFIYGWPFLQTLAMLLIGTVSFHLWIRRNRERNSRSGKTRCRSKRSEQSMDMGTSALSKKPWWTLPQNFHAPMVFHMEEDQEELIFGHGDTYLRCIEVHSHTLIQLESWFTATGQTRVTVVGPHRARQWLLHMFCCVGSQDSYHHARGLEMLERVRSQPLTNDDLVTSISVPPYTGDLSLAPRISGTVCLSVPQPSPYQVIGCSGFHLSSLYP</sequence>
<proteinExistence type="evidence at protein level"/>
<name>KHDC1_HUMAN</name>